<name>SYV_LACPL</name>
<accession>Q88UX7</accession>
<accession>F9UQM9</accession>
<sequence length="889" mass="101526">MSEEPTTDMPTKYDPTAVEAGRYQTWLDQDLFKPSGDKKAKPYSIVIPPPNVTGKLHLGHAWDTTLQDIIIRQKRMQGFDTLWLPGMDHAGIATQAKVEAKLREQGISRYDLGREKFIQQVWDWKDEYASIIKQQWAKMGLSLDYSRERFTMDDGLSDAVKKVFVDLYNKGLIYRGEYIINWDPQARTALSDIEVIHKDDKGAFYHVKYPFADKDYTFNGKHYIEIATTRPETMMGDTAVAVNPSDDRYKELVGKKVILPLAEREIPIIADAYVDPEFGTGMVKITPAHDPNDFKVGNRHDLKRINTMNDDASMNANAGKYEGMDRFEARKAMVKDLEDQDLMIKIDPIVHSVGHSERTDVQVEARLSTQWFVKMKPLAEQALKNQEGDDAVDFIPKRFEDAFKQWMENIHDWVISRQLWWGHRIPAWYNKTTGETYVGVDGPKDPENWEQDPDVLDTWFSSALWPFSTMGWPNTDAEDFKRYFPTNTLVTGYDILPFWVSRMIFQSLEFTGRRPFKNVLLHGLIRDEHGVKMSKSLGNGIDPMDVIEKYGADALRWFLSNGSTAGQDVRFSYTKMDAAWNFINKIWNASRYVIMNLGTMDKPELPAASDWTLADKWILSRLNATVKQVTTTFDKFDFGEAGRALYNFIWNDFCDWYIEMSKEVLTGDDAQAKANTQNVLAYVLDQILRLLHPIMPFVTEKIWLSMPHVGESLVVAAYPVDHPEFDDETAESDMASLIELITAVRSIRAEANAKMSSAVDLLIKTDNTRLQAVFKANEDYIQRFAHPKTLSIGADVVAPKLAMTQVISDAEVYIPLAELVDLDEEVKKLEKEQAKFESEVARATKKLGNERFVANAPEDVVNSEKEKLADNQTKLAALKQRLVDIKAEA</sequence>
<protein>
    <recommendedName>
        <fullName evidence="1">Valine--tRNA ligase</fullName>
        <ecNumber evidence="1">6.1.1.9</ecNumber>
    </recommendedName>
    <alternativeName>
        <fullName evidence="1">Valyl-tRNA synthetase</fullName>
        <shortName evidence="1">ValRS</shortName>
    </alternativeName>
</protein>
<proteinExistence type="inferred from homology"/>
<reference key="1">
    <citation type="journal article" date="2003" name="Proc. Natl. Acad. Sci. U.S.A.">
        <title>Complete genome sequence of Lactobacillus plantarum WCFS1.</title>
        <authorList>
            <person name="Kleerebezem M."/>
            <person name="Boekhorst J."/>
            <person name="van Kranenburg R."/>
            <person name="Molenaar D."/>
            <person name="Kuipers O.P."/>
            <person name="Leer R."/>
            <person name="Tarchini R."/>
            <person name="Peters S.A."/>
            <person name="Sandbrink H.M."/>
            <person name="Fiers M.W.E.J."/>
            <person name="Stiekema W."/>
            <person name="Klein Lankhorst R.M."/>
            <person name="Bron P.A."/>
            <person name="Hoffer S.M."/>
            <person name="Nierop Groot M.N."/>
            <person name="Kerkhoven R."/>
            <person name="De Vries M."/>
            <person name="Ursing B."/>
            <person name="De Vos W.M."/>
            <person name="Siezen R.J."/>
        </authorList>
    </citation>
    <scope>NUCLEOTIDE SEQUENCE [LARGE SCALE GENOMIC DNA]</scope>
    <source>
        <strain>ATCC BAA-793 / NCIMB 8826 / WCFS1</strain>
    </source>
</reference>
<reference key="2">
    <citation type="journal article" date="2012" name="J. Bacteriol.">
        <title>Complete resequencing and reannotation of the Lactobacillus plantarum WCFS1 genome.</title>
        <authorList>
            <person name="Siezen R.J."/>
            <person name="Francke C."/>
            <person name="Renckens B."/>
            <person name="Boekhorst J."/>
            <person name="Wels M."/>
            <person name="Kleerebezem M."/>
            <person name="van Hijum S.A."/>
        </authorList>
    </citation>
    <scope>NUCLEOTIDE SEQUENCE [LARGE SCALE GENOMIC DNA]</scope>
    <scope>GENOME REANNOTATION</scope>
    <source>
        <strain>ATCC BAA-793 / NCIMB 8826 / WCFS1</strain>
    </source>
</reference>
<organism>
    <name type="scientific">Lactiplantibacillus plantarum (strain ATCC BAA-793 / NCIMB 8826 / WCFS1)</name>
    <name type="common">Lactobacillus plantarum</name>
    <dbReference type="NCBI Taxonomy" id="220668"/>
    <lineage>
        <taxon>Bacteria</taxon>
        <taxon>Bacillati</taxon>
        <taxon>Bacillota</taxon>
        <taxon>Bacilli</taxon>
        <taxon>Lactobacillales</taxon>
        <taxon>Lactobacillaceae</taxon>
        <taxon>Lactiplantibacillus</taxon>
    </lineage>
</organism>
<comment type="function">
    <text evidence="1">Catalyzes the attachment of valine to tRNA(Val). As ValRS can inadvertently accommodate and process structurally similar amino acids such as threonine, to avoid such errors, it has a 'posttransfer' editing activity that hydrolyzes mischarged Thr-tRNA(Val) in a tRNA-dependent manner.</text>
</comment>
<comment type="catalytic activity">
    <reaction evidence="1">
        <text>tRNA(Val) + L-valine + ATP = L-valyl-tRNA(Val) + AMP + diphosphate</text>
        <dbReference type="Rhea" id="RHEA:10704"/>
        <dbReference type="Rhea" id="RHEA-COMP:9672"/>
        <dbReference type="Rhea" id="RHEA-COMP:9708"/>
        <dbReference type="ChEBI" id="CHEBI:30616"/>
        <dbReference type="ChEBI" id="CHEBI:33019"/>
        <dbReference type="ChEBI" id="CHEBI:57762"/>
        <dbReference type="ChEBI" id="CHEBI:78442"/>
        <dbReference type="ChEBI" id="CHEBI:78537"/>
        <dbReference type="ChEBI" id="CHEBI:456215"/>
        <dbReference type="EC" id="6.1.1.9"/>
    </reaction>
</comment>
<comment type="subunit">
    <text evidence="1">Monomer.</text>
</comment>
<comment type="subcellular location">
    <subcellularLocation>
        <location evidence="1">Cytoplasm</location>
    </subcellularLocation>
</comment>
<comment type="domain">
    <text evidence="1">ValRS has two distinct active sites: one for aminoacylation and one for editing. The misactivated threonine is translocated from the active site to the editing site.</text>
</comment>
<comment type="domain">
    <text evidence="1">The C-terminal coiled-coil domain is crucial for aminoacylation activity.</text>
</comment>
<comment type="similarity">
    <text evidence="1">Belongs to the class-I aminoacyl-tRNA synthetase family. ValS type 1 subfamily.</text>
</comment>
<keyword id="KW-0030">Aminoacyl-tRNA synthetase</keyword>
<keyword id="KW-0067">ATP-binding</keyword>
<keyword id="KW-0175">Coiled coil</keyword>
<keyword id="KW-0963">Cytoplasm</keyword>
<keyword id="KW-0436">Ligase</keyword>
<keyword id="KW-0547">Nucleotide-binding</keyword>
<keyword id="KW-0648">Protein biosynthesis</keyword>
<keyword id="KW-1185">Reference proteome</keyword>
<dbReference type="EC" id="6.1.1.9" evidence="1"/>
<dbReference type="EMBL" id="AL935263">
    <property type="protein sequence ID" value="CCC79518.1"/>
    <property type="molecule type" value="Genomic_DNA"/>
</dbReference>
<dbReference type="RefSeq" id="WP_011101712.1">
    <property type="nucleotide sequence ID" value="NC_004567.2"/>
</dbReference>
<dbReference type="RefSeq" id="YP_004890032.1">
    <property type="nucleotide sequence ID" value="NC_004567.2"/>
</dbReference>
<dbReference type="SMR" id="Q88UX7"/>
<dbReference type="STRING" id="220668.lp_2322"/>
<dbReference type="EnsemblBacteria" id="CCC79518">
    <property type="protein sequence ID" value="CCC79518"/>
    <property type="gene ID" value="lp_2322"/>
</dbReference>
<dbReference type="KEGG" id="lpl:lp_2322"/>
<dbReference type="PATRIC" id="fig|220668.9.peg.1963"/>
<dbReference type="eggNOG" id="COG0525">
    <property type="taxonomic scope" value="Bacteria"/>
</dbReference>
<dbReference type="HOGENOM" id="CLU_001493_0_2_9"/>
<dbReference type="OrthoDB" id="9810365at2"/>
<dbReference type="PhylomeDB" id="Q88UX7"/>
<dbReference type="Proteomes" id="UP000000432">
    <property type="component" value="Chromosome"/>
</dbReference>
<dbReference type="GO" id="GO:0005829">
    <property type="term" value="C:cytosol"/>
    <property type="evidence" value="ECO:0007669"/>
    <property type="project" value="TreeGrafter"/>
</dbReference>
<dbReference type="GO" id="GO:0002161">
    <property type="term" value="F:aminoacyl-tRNA deacylase activity"/>
    <property type="evidence" value="ECO:0007669"/>
    <property type="project" value="InterPro"/>
</dbReference>
<dbReference type="GO" id="GO:0005524">
    <property type="term" value="F:ATP binding"/>
    <property type="evidence" value="ECO:0007669"/>
    <property type="project" value="UniProtKB-UniRule"/>
</dbReference>
<dbReference type="GO" id="GO:0004832">
    <property type="term" value="F:valine-tRNA ligase activity"/>
    <property type="evidence" value="ECO:0007669"/>
    <property type="project" value="UniProtKB-UniRule"/>
</dbReference>
<dbReference type="GO" id="GO:0006438">
    <property type="term" value="P:valyl-tRNA aminoacylation"/>
    <property type="evidence" value="ECO:0007669"/>
    <property type="project" value="UniProtKB-UniRule"/>
</dbReference>
<dbReference type="CDD" id="cd07962">
    <property type="entry name" value="Anticodon_Ia_Val"/>
    <property type="match status" value="1"/>
</dbReference>
<dbReference type="CDD" id="cd00817">
    <property type="entry name" value="ValRS_core"/>
    <property type="match status" value="1"/>
</dbReference>
<dbReference type="FunFam" id="1.10.287.380:FF:000001">
    <property type="entry name" value="Valine--tRNA ligase"/>
    <property type="match status" value="1"/>
</dbReference>
<dbReference type="FunFam" id="1.10.730.10:FF:000014">
    <property type="entry name" value="Valine--tRNA ligase"/>
    <property type="match status" value="1"/>
</dbReference>
<dbReference type="FunFam" id="3.40.50.620:FF:000032">
    <property type="entry name" value="Valine--tRNA ligase"/>
    <property type="match status" value="1"/>
</dbReference>
<dbReference type="FunFam" id="3.40.50.620:FF:000098">
    <property type="entry name" value="Valine--tRNA ligase"/>
    <property type="match status" value="1"/>
</dbReference>
<dbReference type="FunFam" id="3.90.740.10:FF:000005">
    <property type="entry name" value="Valine--tRNA ligase, mitochondrial"/>
    <property type="match status" value="1"/>
</dbReference>
<dbReference type="Gene3D" id="3.40.50.620">
    <property type="entry name" value="HUPs"/>
    <property type="match status" value="2"/>
</dbReference>
<dbReference type="Gene3D" id="1.10.730.10">
    <property type="entry name" value="Isoleucyl-tRNA Synthetase, Domain 1"/>
    <property type="match status" value="1"/>
</dbReference>
<dbReference type="Gene3D" id="1.10.287.380">
    <property type="entry name" value="Valyl-tRNA synthetase, C-terminal domain"/>
    <property type="match status" value="1"/>
</dbReference>
<dbReference type="Gene3D" id="3.90.740.10">
    <property type="entry name" value="Valyl/Leucyl/Isoleucyl-tRNA synthetase, editing domain"/>
    <property type="match status" value="1"/>
</dbReference>
<dbReference type="HAMAP" id="MF_02004">
    <property type="entry name" value="Val_tRNA_synth_type1"/>
    <property type="match status" value="1"/>
</dbReference>
<dbReference type="InterPro" id="IPR001412">
    <property type="entry name" value="aa-tRNA-synth_I_CS"/>
</dbReference>
<dbReference type="InterPro" id="IPR002300">
    <property type="entry name" value="aa-tRNA-synth_Ia"/>
</dbReference>
<dbReference type="InterPro" id="IPR033705">
    <property type="entry name" value="Anticodon_Ia_Val"/>
</dbReference>
<dbReference type="InterPro" id="IPR013155">
    <property type="entry name" value="M/V/L/I-tRNA-synth_anticd-bd"/>
</dbReference>
<dbReference type="InterPro" id="IPR014729">
    <property type="entry name" value="Rossmann-like_a/b/a_fold"/>
</dbReference>
<dbReference type="InterPro" id="IPR010978">
    <property type="entry name" value="tRNA-bd_arm"/>
</dbReference>
<dbReference type="InterPro" id="IPR009080">
    <property type="entry name" value="tRNAsynth_Ia_anticodon-bd"/>
</dbReference>
<dbReference type="InterPro" id="IPR037118">
    <property type="entry name" value="Val-tRNA_synth_C_sf"/>
</dbReference>
<dbReference type="InterPro" id="IPR019499">
    <property type="entry name" value="Val-tRNA_synth_tRNA-bd"/>
</dbReference>
<dbReference type="InterPro" id="IPR009008">
    <property type="entry name" value="Val/Leu/Ile-tRNA-synth_edit"/>
</dbReference>
<dbReference type="InterPro" id="IPR002303">
    <property type="entry name" value="Valyl-tRNA_ligase"/>
</dbReference>
<dbReference type="NCBIfam" id="NF004349">
    <property type="entry name" value="PRK05729.1"/>
    <property type="match status" value="1"/>
</dbReference>
<dbReference type="NCBIfam" id="TIGR00422">
    <property type="entry name" value="valS"/>
    <property type="match status" value="1"/>
</dbReference>
<dbReference type="PANTHER" id="PTHR11946:SF93">
    <property type="entry name" value="VALINE--TRNA LIGASE, CHLOROPLASTIC_MITOCHONDRIAL 2"/>
    <property type="match status" value="1"/>
</dbReference>
<dbReference type="PANTHER" id="PTHR11946">
    <property type="entry name" value="VALYL-TRNA SYNTHETASES"/>
    <property type="match status" value="1"/>
</dbReference>
<dbReference type="Pfam" id="PF08264">
    <property type="entry name" value="Anticodon_1"/>
    <property type="match status" value="1"/>
</dbReference>
<dbReference type="Pfam" id="PF00133">
    <property type="entry name" value="tRNA-synt_1"/>
    <property type="match status" value="2"/>
</dbReference>
<dbReference type="Pfam" id="PF10458">
    <property type="entry name" value="Val_tRNA-synt_C"/>
    <property type="match status" value="1"/>
</dbReference>
<dbReference type="PRINTS" id="PR00986">
    <property type="entry name" value="TRNASYNTHVAL"/>
</dbReference>
<dbReference type="SUPFAM" id="SSF47323">
    <property type="entry name" value="Anticodon-binding domain of a subclass of class I aminoacyl-tRNA synthetases"/>
    <property type="match status" value="1"/>
</dbReference>
<dbReference type="SUPFAM" id="SSF52374">
    <property type="entry name" value="Nucleotidylyl transferase"/>
    <property type="match status" value="1"/>
</dbReference>
<dbReference type="SUPFAM" id="SSF46589">
    <property type="entry name" value="tRNA-binding arm"/>
    <property type="match status" value="1"/>
</dbReference>
<dbReference type="SUPFAM" id="SSF50677">
    <property type="entry name" value="ValRS/IleRS/LeuRS editing domain"/>
    <property type="match status" value="1"/>
</dbReference>
<dbReference type="PROSITE" id="PS00178">
    <property type="entry name" value="AA_TRNA_LIGASE_I"/>
    <property type="match status" value="1"/>
</dbReference>
<evidence type="ECO:0000255" key="1">
    <source>
        <dbReference type="HAMAP-Rule" id="MF_02004"/>
    </source>
</evidence>
<feature type="chain" id="PRO_0000224491" description="Valine--tRNA ligase">
    <location>
        <begin position="1"/>
        <end position="889"/>
    </location>
</feature>
<feature type="coiled-coil region" evidence="1">
    <location>
        <begin position="816"/>
        <end position="889"/>
    </location>
</feature>
<feature type="short sequence motif" description="'HIGH' region">
    <location>
        <begin position="50"/>
        <end position="60"/>
    </location>
</feature>
<feature type="short sequence motif" description="'KMSKS' region">
    <location>
        <begin position="532"/>
        <end position="536"/>
    </location>
</feature>
<feature type="binding site" evidence="1">
    <location>
        <position position="535"/>
    </location>
    <ligand>
        <name>ATP</name>
        <dbReference type="ChEBI" id="CHEBI:30616"/>
    </ligand>
</feature>
<gene>
    <name evidence="1" type="primary">valS</name>
    <name type="ordered locus">lp_2322</name>
</gene>